<organism>
    <name type="scientific">Micrococcus luteus (strain ATCC 4698 / DSM 20030 / JCM 1464 / CCM 169 / CCUG 5858 / IAM 1056 / NBRC 3333 / NCIMB 9278 / NCTC 2665 / VKM Ac-2230)</name>
    <name type="common">Micrococcus lysodeikticus</name>
    <dbReference type="NCBI Taxonomy" id="465515"/>
    <lineage>
        <taxon>Bacteria</taxon>
        <taxon>Bacillati</taxon>
        <taxon>Actinomycetota</taxon>
        <taxon>Actinomycetes</taxon>
        <taxon>Micrococcales</taxon>
        <taxon>Micrococcaceae</taxon>
        <taxon>Micrococcus</taxon>
    </lineage>
</organism>
<gene>
    <name evidence="1" type="primary">rplU</name>
    <name type="ordered locus">Mlut_10110</name>
</gene>
<name>RL21_MICLC</name>
<reference key="1">
    <citation type="journal article" date="2010" name="J. Bacteriol.">
        <title>Genome sequence of the Fleming strain of Micrococcus luteus, a simple free-living actinobacterium.</title>
        <authorList>
            <person name="Young M."/>
            <person name="Artsatbanov V."/>
            <person name="Beller H.R."/>
            <person name="Chandra G."/>
            <person name="Chater K.F."/>
            <person name="Dover L.G."/>
            <person name="Goh E.B."/>
            <person name="Kahan T."/>
            <person name="Kaprelyants A.S."/>
            <person name="Kyrpides N."/>
            <person name="Lapidus A."/>
            <person name="Lowry S.R."/>
            <person name="Lykidis A."/>
            <person name="Mahillon J."/>
            <person name="Markowitz V."/>
            <person name="Mavromatis K."/>
            <person name="Mukamolova G.V."/>
            <person name="Oren A."/>
            <person name="Rokem J.S."/>
            <person name="Smith M.C."/>
            <person name="Young D.I."/>
            <person name="Greenblatt C.L."/>
        </authorList>
    </citation>
    <scope>NUCLEOTIDE SEQUENCE [LARGE SCALE GENOMIC DNA]</scope>
    <source>
        <strain>ATCC 4698 / DSM 20030 / JCM 1464 / CCM 169 / CCUG 5858 / IAM 1056 / NBRC 3333 / NCIMB 9278 / NCTC 2665 / VKM Ac-2230</strain>
    </source>
</reference>
<dbReference type="EMBL" id="CP001628">
    <property type="protein sequence ID" value="ACS30526.1"/>
    <property type="molecule type" value="Genomic_DNA"/>
</dbReference>
<dbReference type="RefSeq" id="WP_002853919.1">
    <property type="nucleotide sequence ID" value="NZ_WBMF01000020.1"/>
</dbReference>
<dbReference type="SMR" id="C5CAZ3"/>
<dbReference type="STRING" id="465515.Mlut_10110"/>
<dbReference type="EnsemblBacteria" id="ACS30526">
    <property type="protein sequence ID" value="ACS30526"/>
    <property type="gene ID" value="Mlut_10110"/>
</dbReference>
<dbReference type="GeneID" id="93362734"/>
<dbReference type="KEGG" id="mlu:Mlut_10110"/>
<dbReference type="eggNOG" id="COG0261">
    <property type="taxonomic scope" value="Bacteria"/>
</dbReference>
<dbReference type="HOGENOM" id="CLU_061463_3_0_11"/>
<dbReference type="Proteomes" id="UP000000738">
    <property type="component" value="Chromosome"/>
</dbReference>
<dbReference type="GO" id="GO:0005737">
    <property type="term" value="C:cytoplasm"/>
    <property type="evidence" value="ECO:0007669"/>
    <property type="project" value="UniProtKB-ARBA"/>
</dbReference>
<dbReference type="GO" id="GO:1990904">
    <property type="term" value="C:ribonucleoprotein complex"/>
    <property type="evidence" value="ECO:0007669"/>
    <property type="project" value="UniProtKB-KW"/>
</dbReference>
<dbReference type="GO" id="GO:0005840">
    <property type="term" value="C:ribosome"/>
    <property type="evidence" value="ECO:0007669"/>
    <property type="project" value="UniProtKB-KW"/>
</dbReference>
<dbReference type="GO" id="GO:0019843">
    <property type="term" value="F:rRNA binding"/>
    <property type="evidence" value="ECO:0007669"/>
    <property type="project" value="UniProtKB-UniRule"/>
</dbReference>
<dbReference type="GO" id="GO:0003735">
    <property type="term" value="F:structural constituent of ribosome"/>
    <property type="evidence" value="ECO:0007669"/>
    <property type="project" value="InterPro"/>
</dbReference>
<dbReference type="GO" id="GO:0006412">
    <property type="term" value="P:translation"/>
    <property type="evidence" value="ECO:0007669"/>
    <property type="project" value="UniProtKB-UniRule"/>
</dbReference>
<dbReference type="HAMAP" id="MF_01363">
    <property type="entry name" value="Ribosomal_bL21"/>
    <property type="match status" value="1"/>
</dbReference>
<dbReference type="InterPro" id="IPR028909">
    <property type="entry name" value="bL21-like"/>
</dbReference>
<dbReference type="InterPro" id="IPR036164">
    <property type="entry name" value="bL21-like_sf"/>
</dbReference>
<dbReference type="InterPro" id="IPR001787">
    <property type="entry name" value="Ribosomal_bL21"/>
</dbReference>
<dbReference type="NCBIfam" id="TIGR00061">
    <property type="entry name" value="L21"/>
    <property type="match status" value="1"/>
</dbReference>
<dbReference type="PANTHER" id="PTHR21349">
    <property type="entry name" value="50S RIBOSOMAL PROTEIN L21"/>
    <property type="match status" value="1"/>
</dbReference>
<dbReference type="PANTHER" id="PTHR21349:SF0">
    <property type="entry name" value="LARGE RIBOSOMAL SUBUNIT PROTEIN BL21M"/>
    <property type="match status" value="1"/>
</dbReference>
<dbReference type="Pfam" id="PF00829">
    <property type="entry name" value="Ribosomal_L21p"/>
    <property type="match status" value="1"/>
</dbReference>
<dbReference type="SUPFAM" id="SSF141091">
    <property type="entry name" value="L21p-like"/>
    <property type="match status" value="1"/>
</dbReference>
<feature type="chain" id="PRO_1000214897" description="Large ribosomal subunit protein bL21">
    <location>
        <begin position="1"/>
        <end position="101"/>
    </location>
</feature>
<comment type="function">
    <text evidence="1">This protein binds to 23S rRNA in the presence of protein L20.</text>
</comment>
<comment type="subunit">
    <text evidence="1">Part of the 50S ribosomal subunit. Contacts protein L20.</text>
</comment>
<comment type="similarity">
    <text evidence="1">Belongs to the bacterial ribosomal protein bL21 family.</text>
</comment>
<accession>C5CAZ3</accession>
<evidence type="ECO:0000255" key="1">
    <source>
        <dbReference type="HAMAP-Rule" id="MF_01363"/>
    </source>
</evidence>
<evidence type="ECO:0000305" key="2"/>
<keyword id="KW-1185">Reference proteome</keyword>
<keyword id="KW-0687">Ribonucleoprotein</keyword>
<keyword id="KW-0689">Ribosomal protein</keyword>
<keyword id="KW-0694">RNA-binding</keyword>
<keyword id="KW-0699">rRNA-binding</keyword>
<sequence>MVYAIVRAGGRQEKVSVGDLVTLDRVPAETGGSVELPALMLVDGDEVKAGADAAGVKVTAEVVSHSRGKKVVIMKYKNKTGYKKRQGHRSELSTVKITGIA</sequence>
<protein>
    <recommendedName>
        <fullName evidence="1">Large ribosomal subunit protein bL21</fullName>
    </recommendedName>
    <alternativeName>
        <fullName evidence="2">50S ribosomal protein L21</fullName>
    </alternativeName>
</protein>
<proteinExistence type="inferred from homology"/>